<keyword id="KW-0004">4Fe-4S</keyword>
<keyword id="KW-0143">Chaperone</keyword>
<keyword id="KW-0963">Cytoplasm</keyword>
<keyword id="KW-1015">Disulfide bond</keyword>
<keyword id="KW-0238">DNA-binding</keyword>
<keyword id="KW-0408">Iron</keyword>
<keyword id="KW-0411">Iron-sulfur</keyword>
<keyword id="KW-0479">Metal-binding</keyword>
<keyword id="KW-1185">Reference proteome</keyword>
<keyword id="KW-0804">Transcription</keyword>
<keyword id="KW-0805">Transcription regulation</keyword>
<name>WHB2B_MYCTO</name>
<comment type="function">
    <text evidence="1 5">Acts as a transcriptional regulator. Probably redox-responsive. The apo- but not holo-form probably binds DNA (By similarity). Complements a whiB2 disruption mutant in M.smegmatis (AC Q9S426).</text>
</comment>
<comment type="function">
    <text evidence="1">The apo-form functions as a chaperone, preventing aggregation or helping in correct refolding of a number of substrates.</text>
</comment>
<comment type="cofactor">
    <cofactor evidence="1">
        <name>[4Fe-4S] cluster</name>
        <dbReference type="ChEBI" id="CHEBI:49883"/>
    </cofactor>
    <text evidence="1">Binds 1 [4Fe-4S] cluster per subunit. Following nitrosylation of the [4Fe-4S] cluster binds 1 [4Fe-8(NO)] cluster per subunit.</text>
</comment>
<comment type="subcellular location">
    <subcellularLocation>
        <location evidence="1">Cytoplasm</location>
    </subcellularLocation>
</comment>
<comment type="induction">
    <text evidence="3 4 6">Steady during exponential growth (at protein level), decreases as cells age in stationary phase. About 2-fold induced by cell-wall active agents cycloserine, ethambutol and isoniazid, 5-fold by starvation. Repressed by heat shock and SDS. Slightly repressed in hypoxia and in macrophage and mouse infection, slightly induced by NO and cAMP.</text>
</comment>
<comment type="PTM">
    <text evidence="1">The Fe-S cluster can be nitrosylated by nitric oxide (NO).</text>
</comment>
<comment type="PTM">
    <text evidence="1">Upon Fe-S cluster removal intramolecular disulfide bonds are formed.</text>
</comment>
<comment type="disruption phenotype">
    <text evidence="4">Probably essential; depletion experiments (by expressing antisense RNA) show smaller colonies are formed, while individual cells are elongated and/or filamented. Colonies are glossy and spherical, cells are less viable.</text>
</comment>
<comment type="similarity">
    <text evidence="7">Belongs to the WhiB family.</text>
</comment>
<comment type="sequence caution" evidence="7">
    <conflict type="erroneous initiation">
        <sequence resource="EMBL-CDS" id="AAK47700"/>
    </conflict>
    <text>Extended N-terminus.</text>
</comment>
<sequence length="89" mass="10157">MVPEAPAPFEEPLPPEATDQWQDRALCAQTDPEAFFPEKGGSTREAKKICMGCEVRHECLEYALAHDERFGIWGGLSERERRRLKRGII</sequence>
<protein>
    <recommendedName>
        <fullName>Transcriptional regulator WhiB2</fullName>
    </recommendedName>
    <alternativeName>
        <fullName>Probable chaperone WhiB2</fullName>
    </alternativeName>
</protein>
<feature type="chain" id="PRO_0000420381" description="Transcriptional regulator WhiB2">
    <location>
        <begin position="1"/>
        <end position="89"/>
    </location>
</feature>
<feature type="domain" description="4Fe-4S Wbl-type">
    <location>
        <begin position="26"/>
        <end position="83"/>
    </location>
</feature>
<feature type="region of interest" description="Disordered" evidence="2">
    <location>
        <begin position="1"/>
        <end position="24"/>
    </location>
</feature>
<feature type="compositionally biased region" description="Pro residues" evidence="2">
    <location>
        <begin position="1"/>
        <end position="15"/>
    </location>
</feature>
<feature type="binding site" evidence="1">
    <location>
        <position position="27"/>
    </location>
    <ligand>
        <name>[4Fe-4S] cluster</name>
        <dbReference type="ChEBI" id="CHEBI:49883"/>
    </ligand>
</feature>
<feature type="binding site" evidence="1">
    <location>
        <position position="50"/>
    </location>
    <ligand>
        <name>[4Fe-4S] cluster</name>
        <dbReference type="ChEBI" id="CHEBI:49883"/>
    </ligand>
</feature>
<feature type="binding site" evidence="1">
    <location>
        <position position="53"/>
    </location>
    <ligand>
        <name>[4Fe-4S] cluster</name>
        <dbReference type="ChEBI" id="CHEBI:49883"/>
    </ligand>
</feature>
<feature type="binding site" evidence="1">
    <location>
        <position position="59"/>
    </location>
    <ligand>
        <name>[4Fe-4S] cluster</name>
        <dbReference type="ChEBI" id="CHEBI:49883"/>
    </ligand>
</feature>
<dbReference type="EMBL" id="AE000516">
    <property type="protein sequence ID" value="AAK47700.1"/>
    <property type="status" value="ALT_INIT"/>
    <property type="molecule type" value="Genomic_DNA"/>
</dbReference>
<dbReference type="SMR" id="Q7D5T7"/>
<dbReference type="KEGG" id="mtc:MT3358"/>
<dbReference type="PATRIC" id="fig|83331.31.peg.3614"/>
<dbReference type="HOGENOM" id="CLU_106245_4_1_11"/>
<dbReference type="Proteomes" id="UP000001020">
    <property type="component" value="Chromosome"/>
</dbReference>
<dbReference type="GO" id="GO:0005737">
    <property type="term" value="C:cytoplasm"/>
    <property type="evidence" value="ECO:0007669"/>
    <property type="project" value="UniProtKB-SubCell"/>
</dbReference>
<dbReference type="GO" id="GO:0051539">
    <property type="term" value="F:4 iron, 4 sulfur cluster binding"/>
    <property type="evidence" value="ECO:0007669"/>
    <property type="project" value="UniProtKB-UniRule"/>
</dbReference>
<dbReference type="GO" id="GO:0035731">
    <property type="term" value="F:dinitrosyl-iron complex binding"/>
    <property type="evidence" value="ECO:0007669"/>
    <property type="project" value="UniProtKB-UniRule"/>
</dbReference>
<dbReference type="GO" id="GO:0003677">
    <property type="term" value="F:DNA binding"/>
    <property type="evidence" value="ECO:0007669"/>
    <property type="project" value="UniProtKB-UniRule"/>
</dbReference>
<dbReference type="GO" id="GO:0046872">
    <property type="term" value="F:metal ion binding"/>
    <property type="evidence" value="ECO:0007669"/>
    <property type="project" value="UniProtKB-KW"/>
</dbReference>
<dbReference type="GO" id="GO:0047134">
    <property type="term" value="F:protein-disulfide reductase [NAD(P)H] activity"/>
    <property type="evidence" value="ECO:0007669"/>
    <property type="project" value="TreeGrafter"/>
</dbReference>
<dbReference type="GO" id="GO:0045454">
    <property type="term" value="P:cell redox homeostasis"/>
    <property type="evidence" value="ECO:0007669"/>
    <property type="project" value="TreeGrafter"/>
</dbReference>
<dbReference type="GO" id="GO:0045892">
    <property type="term" value="P:negative regulation of DNA-templated transcription"/>
    <property type="evidence" value="ECO:0007669"/>
    <property type="project" value="TreeGrafter"/>
</dbReference>
<dbReference type="HAMAP" id="MF_01479">
    <property type="entry name" value="WhiB"/>
    <property type="match status" value="1"/>
</dbReference>
<dbReference type="InterPro" id="IPR034768">
    <property type="entry name" value="4FE4S_WBL"/>
</dbReference>
<dbReference type="InterPro" id="IPR003482">
    <property type="entry name" value="Whib"/>
</dbReference>
<dbReference type="PANTHER" id="PTHR38839:SF4">
    <property type="entry name" value="TRANSCRIPTIONAL REGULATOR WHIB"/>
    <property type="match status" value="1"/>
</dbReference>
<dbReference type="PANTHER" id="PTHR38839">
    <property type="entry name" value="TRANSCRIPTIONAL REGULATOR WHID-RELATED"/>
    <property type="match status" value="1"/>
</dbReference>
<dbReference type="Pfam" id="PF02467">
    <property type="entry name" value="Whib"/>
    <property type="match status" value="1"/>
</dbReference>
<dbReference type="PROSITE" id="PS51674">
    <property type="entry name" value="4FE4S_WBL"/>
    <property type="match status" value="1"/>
</dbReference>
<evidence type="ECO:0000250" key="1"/>
<evidence type="ECO:0000256" key="2">
    <source>
        <dbReference type="SAM" id="MobiDB-lite"/>
    </source>
</evidence>
<evidence type="ECO:0000269" key="3">
    <source>
    </source>
</evidence>
<evidence type="ECO:0000269" key="4">
    <source>
    </source>
</evidence>
<evidence type="ECO:0000269" key="5">
    <source>
    </source>
</evidence>
<evidence type="ECO:0000269" key="6">
    <source>
    </source>
</evidence>
<evidence type="ECO:0000305" key="7"/>
<organism>
    <name type="scientific">Mycobacterium tuberculosis (strain CDC 1551 / Oshkosh)</name>
    <dbReference type="NCBI Taxonomy" id="83331"/>
    <lineage>
        <taxon>Bacteria</taxon>
        <taxon>Bacillati</taxon>
        <taxon>Actinomycetota</taxon>
        <taxon>Actinomycetes</taxon>
        <taxon>Mycobacteriales</taxon>
        <taxon>Mycobacteriaceae</taxon>
        <taxon>Mycobacterium</taxon>
        <taxon>Mycobacterium tuberculosis complex</taxon>
    </lineage>
</organism>
<reference key="1">
    <citation type="journal article" date="2002" name="J. Bacteriol.">
        <title>Whole-genome comparison of Mycobacterium tuberculosis clinical and laboratory strains.</title>
        <authorList>
            <person name="Fleischmann R.D."/>
            <person name="Alland D."/>
            <person name="Eisen J.A."/>
            <person name="Carpenter L."/>
            <person name="White O."/>
            <person name="Peterson J.D."/>
            <person name="DeBoy R.T."/>
            <person name="Dodson R.J."/>
            <person name="Gwinn M.L."/>
            <person name="Haft D.H."/>
            <person name="Hickey E.K."/>
            <person name="Kolonay J.F."/>
            <person name="Nelson W.C."/>
            <person name="Umayam L.A."/>
            <person name="Ermolaeva M.D."/>
            <person name="Salzberg S.L."/>
            <person name="Delcher A."/>
            <person name="Utterback T.R."/>
            <person name="Weidman J.F."/>
            <person name="Khouri H.M."/>
            <person name="Gill J."/>
            <person name="Mikula A."/>
            <person name="Bishai W."/>
            <person name="Jacobs W.R. Jr."/>
            <person name="Venter J.C."/>
            <person name="Fraser C.M."/>
        </authorList>
    </citation>
    <scope>NUCLEOTIDE SEQUENCE [LARGE SCALE GENOMIC DNA]</scope>
    <source>
        <strain>CDC 1551 / Oshkosh</strain>
    </source>
</reference>
<reference key="2">
    <citation type="journal article" date="2006" name="Antimicrob. Agents Chemother.">
        <title>Differential gene expression in response to exposure to antimycobacterial agents and other stress conditions among seven Mycobacterium tuberculosis whiB-like genes.</title>
        <authorList>
            <person name="Geiman D.E."/>
            <person name="Raghunand T.R."/>
            <person name="Agarwal N."/>
            <person name="Bishai W.R."/>
        </authorList>
    </citation>
    <scope>INDUCTION</scope>
    <source>
        <strain>CDC 1551 / Oshkosh</strain>
    </source>
</reference>
<reference key="3">
    <citation type="journal article" date="2006" name="J. Bacteriol.">
        <title>Mapping essential domains of Mycobacterium smegmatis WhmD: insights into WhiB structure and function.</title>
        <authorList>
            <person name="Raghunand T.R."/>
            <person name="Bishai W.R."/>
        </authorList>
    </citation>
    <scope>FUNCTION</scope>
    <source>
        <strain>CDC 1551 / Oshkosh</strain>
    </source>
</reference>
<reference key="4">
    <citation type="journal article" date="2006" name="Microbiology">
        <title>Mycobacterium smegmatis whmD and its homologue Mycobacterium tuberculosis whiB2 are functionally equivalent.</title>
        <authorList>
            <person name="Raghunand T.R."/>
            <person name="Bishai W.R."/>
        </authorList>
    </citation>
    <scope>INDUCTION</scope>
    <scope>DISRUPTION PHENOTYPE</scope>
    <source>
        <strain>CDC 1551 / Oshkosh</strain>
    </source>
</reference>
<reference key="5">
    <citation type="journal article" date="2012" name="PLoS ONE">
        <title>Gene expression of Mycobacterium tuberculosis putative transcription factors whiB1-7 in redox environments.</title>
        <authorList>
            <person name="Larsson C."/>
            <person name="Luna B."/>
            <person name="Ammerman N.C."/>
            <person name="Maiga M."/>
            <person name="Agarwal N."/>
            <person name="Bishai W.R."/>
        </authorList>
    </citation>
    <scope>INDUCTION</scope>
    <source>
        <strain>CDC 1551 / Oshkosh</strain>
    </source>
</reference>
<proteinExistence type="evidence at protein level"/>
<accession>Q7D5T7</accession>
<accession>F2GKT3</accession>
<gene>
    <name type="primary">whiB2</name>
    <name type="ordered locus">MT3358</name>
</gene>